<dbReference type="EC" id="6.3.4.2" evidence="1"/>
<dbReference type="EMBL" id="CP000319">
    <property type="protein sequence ID" value="ABE62553.1"/>
    <property type="status" value="ALT_INIT"/>
    <property type="molecule type" value="Genomic_DNA"/>
</dbReference>
<dbReference type="RefSeq" id="WP_041357871.1">
    <property type="nucleotide sequence ID" value="NC_007964.1"/>
</dbReference>
<dbReference type="SMR" id="Q1QMJ4"/>
<dbReference type="STRING" id="323097.Nham_1738"/>
<dbReference type="MEROPS" id="C26.964"/>
<dbReference type="KEGG" id="nha:Nham_1738"/>
<dbReference type="eggNOG" id="COG0504">
    <property type="taxonomic scope" value="Bacteria"/>
</dbReference>
<dbReference type="HOGENOM" id="CLU_011675_5_0_5"/>
<dbReference type="OrthoDB" id="9801107at2"/>
<dbReference type="UniPathway" id="UPA00159">
    <property type="reaction ID" value="UER00277"/>
</dbReference>
<dbReference type="Proteomes" id="UP000001953">
    <property type="component" value="Chromosome"/>
</dbReference>
<dbReference type="GO" id="GO:0005829">
    <property type="term" value="C:cytosol"/>
    <property type="evidence" value="ECO:0007669"/>
    <property type="project" value="TreeGrafter"/>
</dbReference>
<dbReference type="GO" id="GO:0005524">
    <property type="term" value="F:ATP binding"/>
    <property type="evidence" value="ECO:0007669"/>
    <property type="project" value="UniProtKB-KW"/>
</dbReference>
<dbReference type="GO" id="GO:0003883">
    <property type="term" value="F:CTP synthase activity"/>
    <property type="evidence" value="ECO:0007669"/>
    <property type="project" value="UniProtKB-UniRule"/>
</dbReference>
<dbReference type="GO" id="GO:0004359">
    <property type="term" value="F:glutaminase activity"/>
    <property type="evidence" value="ECO:0007669"/>
    <property type="project" value="RHEA"/>
</dbReference>
<dbReference type="GO" id="GO:0042802">
    <property type="term" value="F:identical protein binding"/>
    <property type="evidence" value="ECO:0007669"/>
    <property type="project" value="TreeGrafter"/>
</dbReference>
<dbReference type="GO" id="GO:0046872">
    <property type="term" value="F:metal ion binding"/>
    <property type="evidence" value="ECO:0007669"/>
    <property type="project" value="UniProtKB-KW"/>
</dbReference>
<dbReference type="GO" id="GO:0044210">
    <property type="term" value="P:'de novo' CTP biosynthetic process"/>
    <property type="evidence" value="ECO:0007669"/>
    <property type="project" value="UniProtKB-UniRule"/>
</dbReference>
<dbReference type="GO" id="GO:0019856">
    <property type="term" value="P:pyrimidine nucleobase biosynthetic process"/>
    <property type="evidence" value="ECO:0007669"/>
    <property type="project" value="TreeGrafter"/>
</dbReference>
<dbReference type="CDD" id="cd03113">
    <property type="entry name" value="CTPS_N"/>
    <property type="match status" value="1"/>
</dbReference>
<dbReference type="CDD" id="cd01746">
    <property type="entry name" value="GATase1_CTP_Synthase"/>
    <property type="match status" value="1"/>
</dbReference>
<dbReference type="FunFam" id="3.40.50.300:FF:000009">
    <property type="entry name" value="CTP synthase"/>
    <property type="match status" value="1"/>
</dbReference>
<dbReference type="FunFam" id="3.40.50.880:FF:000002">
    <property type="entry name" value="CTP synthase"/>
    <property type="match status" value="1"/>
</dbReference>
<dbReference type="Gene3D" id="3.40.50.880">
    <property type="match status" value="1"/>
</dbReference>
<dbReference type="Gene3D" id="3.40.50.300">
    <property type="entry name" value="P-loop containing nucleotide triphosphate hydrolases"/>
    <property type="match status" value="1"/>
</dbReference>
<dbReference type="HAMAP" id="MF_01227">
    <property type="entry name" value="PyrG"/>
    <property type="match status" value="1"/>
</dbReference>
<dbReference type="InterPro" id="IPR029062">
    <property type="entry name" value="Class_I_gatase-like"/>
</dbReference>
<dbReference type="InterPro" id="IPR004468">
    <property type="entry name" value="CTP_synthase"/>
</dbReference>
<dbReference type="InterPro" id="IPR017456">
    <property type="entry name" value="CTP_synthase_N"/>
</dbReference>
<dbReference type="InterPro" id="IPR017926">
    <property type="entry name" value="GATASE"/>
</dbReference>
<dbReference type="InterPro" id="IPR033828">
    <property type="entry name" value="GATase1_CTP_Synthase"/>
</dbReference>
<dbReference type="InterPro" id="IPR027417">
    <property type="entry name" value="P-loop_NTPase"/>
</dbReference>
<dbReference type="NCBIfam" id="NF003792">
    <property type="entry name" value="PRK05380.1"/>
    <property type="match status" value="1"/>
</dbReference>
<dbReference type="NCBIfam" id="TIGR00337">
    <property type="entry name" value="PyrG"/>
    <property type="match status" value="1"/>
</dbReference>
<dbReference type="PANTHER" id="PTHR11550">
    <property type="entry name" value="CTP SYNTHASE"/>
    <property type="match status" value="1"/>
</dbReference>
<dbReference type="PANTHER" id="PTHR11550:SF0">
    <property type="entry name" value="CTP SYNTHASE-RELATED"/>
    <property type="match status" value="1"/>
</dbReference>
<dbReference type="Pfam" id="PF06418">
    <property type="entry name" value="CTP_synth_N"/>
    <property type="match status" value="1"/>
</dbReference>
<dbReference type="Pfam" id="PF00117">
    <property type="entry name" value="GATase"/>
    <property type="match status" value="1"/>
</dbReference>
<dbReference type="SUPFAM" id="SSF52317">
    <property type="entry name" value="Class I glutamine amidotransferase-like"/>
    <property type="match status" value="1"/>
</dbReference>
<dbReference type="SUPFAM" id="SSF52540">
    <property type="entry name" value="P-loop containing nucleoside triphosphate hydrolases"/>
    <property type="match status" value="1"/>
</dbReference>
<dbReference type="PROSITE" id="PS51273">
    <property type="entry name" value="GATASE_TYPE_1"/>
    <property type="match status" value="1"/>
</dbReference>
<feature type="chain" id="PRO_0000266162" description="CTP synthase">
    <location>
        <begin position="1"/>
        <end position="542"/>
    </location>
</feature>
<feature type="domain" description="Glutamine amidotransferase type-1" evidence="1">
    <location>
        <begin position="290"/>
        <end position="541"/>
    </location>
</feature>
<feature type="region of interest" description="Amidoligase domain" evidence="1">
    <location>
        <begin position="1"/>
        <end position="265"/>
    </location>
</feature>
<feature type="active site" description="Nucleophile; for glutamine hydrolysis" evidence="1">
    <location>
        <position position="379"/>
    </location>
</feature>
<feature type="active site" evidence="1">
    <location>
        <position position="514"/>
    </location>
</feature>
<feature type="active site" evidence="1">
    <location>
        <position position="516"/>
    </location>
</feature>
<feature type="binding site" evidence="1">
    <location>
        <position position="13"/>
    </location>
    <ligand>
        <name>CTP</name>
        <dbReference type="ChEBI" id="CHEBI:37563"/>
        <note>allosteric inhibitor</note>
    </ligand>
</feature>
<feature type="binding site" evidence="1">
    <location>
        <position position="13"/>
    </location>
    <ligand>
        <name>UTP</name>
        <dbReference type="ChEBI" id="CHEBI:46398"/>
    </ligand>
</feature>
<feature type="binding site" evidence="1">
    <location>
        <begin position="14"/>
        <end position="19"/>
    </location>
    <ligand>
        <name>ATP</name>
        <dbReference type="ChEBI" id="CHEBI:30616"/>
    </ligand>
</feature>
<feature type="binding site" evidence="1">
    <location>
        <position position="54"/>
    </location>
    <ligand>
        <name>L-glutamine</name>
        <dbReference type="ChEBI" id="CHEBI:58359"/>
    </ligand>
</feature>
<feature type="binding site" evidence="1">
    <location>
        <position position="71"/>
    </location>
    <ligand>
        <name>ATP</name>
        <dbReference type="ChEBI" id="CHEBI:30616"/>
    </ligand>
</feature>
<feature type="binding site" evidence="1">
    <location>
        <position position="71"/>
    </location>
    <ligand>
        <name>Mg(2+)</name>
        <dbReference type="ChEBI" id="CHEBI:18420"/>
    </ligand>
</feature>
<feature type="binding site" evidence="1">
    <location>
        <position position="139"/>
    </location>
    <ligand>
        <name>Mg(2+)</name>
        <dbReference type="ChEBI" id="CHEBI:18420"/>
    </ligand>
</feature>
<feature type="binding site" evidence="1">
    <location>
        <begin position="146"/>
        <end position="148"/>
    </location>
    <ligand>
        <name>CTP</name>
        <dbReference type="ChEBI" id="CHEBI:37563"/>
        <note>allosteric inhibitor</note>
    </ligand>
</feature>
<feature type="binding site" evidence="1">
    <location>
        <begin position="186"/>
        <end position="191"/>
    </location>
    <ligand>
        <name>CTP</name>
        <dbReference type="ChEBI" id="CHEBI:37563"/>
        <note>allosteric inhibitor</note>
    </ligand>
</feature>
<feature type="binding site" evidence="1">
    <location>
        <begin position="186"/>
        <end position="191"/>
    </location>
    <ligand>
        <name>UTP</name>
        <dbReference type="ChEBI" id="CHEBI:46398"/>
    </ligand>
</feature>
<feature type="binding site" evidence="1">
    <location>
        <position position="222"/>
    </location>
    <ligand>
        <name>CTP</name>
        <dbReference type="ChEBI" id="CHEBI:37563"/>
        <note>allosteric inhibitor</note>
    </ligand>
</feature>
<feature type="binding site" evidence="1">
    <location>
        <position position="222"/>
    </location>
    <ligand>
        <name>UTP</name>
        <dbReference type="ChEBI" id="CHEBI:46398"/>
    </ligand>
</feature>
<feature type="binding site" evidence="1">
    <location>
        <begin position="238"/>
        <end position="240"/>
    </location>
    <ligand>
        <name>ATP</name>
        <dbReference type="ChEBI" id="CHEBI:30616"/>
    </ligand>
</feature>
<feature type="binding site" evidence="1">
    <location>
        <position position="352"/>
    </location>
    <ligand>
        <name>L-glutamine</name>
        <dbReference type="ChEBI" id="CHEBI:58359"/>
    </ligand>
</feature>
<feature type="binding site" evidence="1">
    <location>
        <begin position="380"/>
        <end position="383"/>
    </location>
    <ligand>
        <name>L-glutamine</name>
        <dbReference type="ChEBI" id="CHEBI:58359"/>
    </ligand>
</feature>
<feature type="binding site" evidence="1">
    <location>
        <position position="403"/>
    </location>
    <ligand>
        <name>L-glutamine</name>
        <dbReference type="ChEBI" id="CHEBI:58359"/>
    </ligand>
</feature>
<feature type="binding site" evidence="1">
    <location>
        <position position="469"/>
    </location>
    <ligand>
        <name>L-glutamine</name>
        <dbReference type="ChEBI" id="CHEBI:58359"/>
    </ligand>
</feature>
<organism>
    <name type="scientific">Nitrobacter hamburgensis (strain DSM 10229 / NCIMB 13809 / X14)</name>
    <dbReference type="NCBI Taxonomy" id="323097"/>
    <lineage>
        <taxon>Bacteria</taxon>
        <taxon>Pseudomonadati</taxon>
        <taxon>Pseudomonadota</taxon>
        <taxon>Alphaproteobacteria</taxon>
        <taxon>Hyphomicrobiales</taxon>
        <taxon>Nitrobacteraceae</taxon>
        <taxon>Nitrobacter</taxon>
    </lineage>
</organism>
<reference key="1">
    <citation type="submission" date="2006-03" db="EMBL/GenBank/DDBJ databases">
        <title>Complete sequence of chromosome of Nitrobacter hamburgensis X14.</title>
        <authorList>
            <consortium name="US DOE Joint Genome Institute"/>
            <person name="Copeland A."/>
            <person name="Lucas S."/>
            <person name="Lapidus A."/>
            <person name="Barry K."/>
            <person name="Detter J.C."/>
            <person name="Glavina del Rio T."/>
            <person name="Hammon N."/>
            <person name="Israni S."/>
            <person name="Dalin E."/>
            <person name="Tice H."/>
            <person name="Pitluck S."/>
            <person name="Chain P."/>
            <person name="Malfatti S."/>
            <person name="Shin M."/>
            <person name="Vergez L."/>
            <person name="Schmutz J."/>
            <person name="Larimer F."/>
            <person name="Land M."/>
            <person name="Hauser L."/>
            <person name="Kyrpides N."/>
            <person name="Ivanova N."/>
            <person name="Ward B."/>
            <person name="Arp D."/>
            <person name="Klotz M."/>
            <person name="Stein L."/>
            <person name="O'Mullan G."/>
            <person name="Starkenburg S."/>
            <person name="Sayavedra L."/>
            <person name="Poret-Peterson A.T."/>
            <person name="Gentry M.E."/>
            <person name="Bruce D."/>
            <person name="Richardson P."/>
        </authorList>
    </citation>
    <scope>NUCLEOTIDE SEQUENCE [LARGE SCALE GENOMIC DNA]</scope>
    <source>
        <strain>DSM 10229 / NCIMB 13809 / X14</strain>
    </source>
</reference>
<accession>Q1QMJ4</accession>
<comment type="function">
    <text evidence="1">Catalyzes the ATP-dependent amination of UTP to CTP with either L-glutamine or ammonia as the source of nitrogen. Regulates intracellular CTP levels through interactions with the four ribonucleotide triphosphates.</text>
</comment>
<comment type="catalytic activity">
    <reaction evidence="1">
        <text>UTP + L-glutamine + ATP + H2O = CTP + L-glutamate + ADP + phosphate + 2 H(+)</text>
        <dbReference type="Rhea" id="RHEA:26426"/>
        <dbReference type="ChEBI" id="CHEBI:15377"/>
        <dbReference type="ChEBI" id="CHEBI:15378"/>
        <dbReference type="ChEBI" id="CHEBI:29985"/>
        <dbReference type="ChEBI" id="CHEBI:30616"/>
        <dbReference type="ChEBI" id="CHEBI:37563"/>
        <dbReference type="ChEBI" id="CHEBI:43474"/>
        <dbReference type="ChEBI" id="CHEBI:46398"/>
        <dbReference type="ChEBI" id="CHEBI:58359"/>
        <dbReference type="ChEBI" id="CHEBI:456216"/>
        <dbReference type="EC" id="6.3.4.2"/>
    </reaction>
</comment>
<comment type="catalytic activity">
    <reaction evidence="1">
        <text>L-glutamine + H2O = L-glutamate + NH4(+)</text>
        <dbReference type="Rhea" id="RHEA:15889"/>
        <dbReference type="ChEBI" id="CHEBI:15377"/>
        <dbReference type="ChEBI" id="CHEBI:28938"/>
        <dbReference type="ChEBI" id="CHEBI:29985"/>
        <dbReference type="ChEBI" id="CHEBI:58359"/>
    </reaction>
</comment>
<comment type="catalytic activity">
    <reaction evidence="1">
        <text>UTP + NH4(+) + ATP = CTP + ADP + phosphate + 2 H(+)</text>
        <dbReference type="Rhea" id="RHEA:16597"/>
        <dbReference type="ChEBI" id="CHEBI:15378"/>
        <dbReference type="ChEBI" id="CHEBI:28938"/>
        <dbReference type="ChEBI" id="CHEBI:30616"/>
        <dbReference type="ChEBI" id="CHEBI:37563"/>
        <dbReference type="ChEBI" id="CHEBI:43474"/>
        <dbReference type="ChEBI" id="CHEBI:46398"/>
        <dbReference type="ChEBI" id="CHEBI:456216"/>
    </reaction>
</comment>
<comment type="activity regulation">
    <text evidence="1">Allosterically activated by GTP, when glutamine is the substrate; GTP has no effect on the reaction when ammonia is the substrate. The allosteric effector GTP functions by stabilizing the protein conformation that binds the tetrahedral intermediate(s) formed during glutamine hydrolysis. Inhibited by the product CTP, via allosteric rather than competitive inhibition.</text>
</comment>
<comment type="pathway">
    <text evidence="1">Pyrimidine metabolism; CTP biosynthesis via de novo pathway; CTP from UDP: step 2/2.</text>
</comment>
<comment type="subunit">
    <text evidence="1">Homotetramer.</text>
</comment>
<comment type="miscellaneous">
    <text evidence="1">CTPSs have evolved a hybrid strategy for distinguishing between UTP and CTP. The overlapping regions of the product feedback inhibitory and substrate sites recognize a common feature in both compounds, the triphosphate moiety. To differentiate isosteric substrate and product pyrimidine rings, an additional pocket far from the expected kinase/ligase catalytic site, specifically recognizes the cytosine and ribose portions of the product inhibitor.</text>
</comment>
<comment type="similarity">
    <text evidence="1">Belongs to the CTP synthase family.</text>
</comment>
<comment type="sequence caution" evidence="2">
    <conflict type="erroneous initiation">
        <sequence resource="EMBL-CDS" id="ABE62553"/>
    </conflict>
</comment>
<protein>
    <recommendedName>
        <fullName evidence="1">CTP synthase</fullName>
        <ecNumber evidence="1">6.3.4.2</ecNumber>
    </recommendedName>
    <alternativeName>
        <fullName evidence="1">Cytidine 5'-triphosphate synthase</fullName>
    </alternativeName>
    <alternativeName>
        <fullName evidence="1">Cytidine triphosphate synthetase</fullName>
        <shortName evidence="1">CTP synthetase</shortName>
        <shortName evidence="1">CTPS</shortName>
    </alternativeName>
    <alternativeName>
        <fullName evidence="1">UTP--ammonia ligase</fullName>
    </alternativeName>
</protein>
<gene>
    <name evidence="1" type="primary">pyrG</name>
    <name type="ordered locus">Nham_1738</name>
</gene>
<keyword id="KW-0067">ATP-binding</keyword>
<keyword id="KW-0315">Glutamine amidotransferase</keyword>
<keyword id="KW-0436">Ligase</keyword>
<keyword id="KW-0460">Magnesium</keyword>
<keyword id="KW-0479">Metal-binding</keyword>
<keyword id="KW-0547">Nucleotide-binding</keyword>
<keyword id="KW-0665">Pyrimidine biosynthesis</keyword>
<keyword id="KW-1185">Reference proteome</keyword>
<evidence type="ECO:0000255" key="1">
    <source>
        <dbReference type="HAMAP-Rule" id="MF_01227"/>
    </source>
</evidence>
<evidence type="ECO:0000305" key="2"/>
<proteinExistence type="inferred from homology"/>
<sequence>MARYIFITGGVVSSLGKGLASAALGALLQARGYKVRLRKLDPYLNLDPGTMSPYQHGEVFVTDDGAETDLDLGHYERFTGRPATRQDNITTGRIYQDILTKERRGDYLGATIQVIPHVTNAIKDFILDGNDGYDFVLCEIGGTVGDIEGLPFFEAIRQIKNDLPRGHAVYVHLTLLPFIPSAGELKTKPTQHSVKELRSIGIQPDILLCRTDRTIPAEERRKLGLFCNVRESAVIEARDADNIYAVPEVYHAAGLDDEVLAAFGLEAPAPDLRSWHEINARVHNPEGQVTIAIVGKYTGMKDAYKSLIEALSHGGIANKVKVKLDWIESEVFENEDAAPFLEHVDGILVPGGFGQRGAEGKIKAAQFARERHVPYFGICFGMQMAVIEAARNLVGIPSANSTEFGPTSEPLVGLMTEWLRGNELEKRSRAGDLGGTMRLGAYPAALKRGSRVSGIYGGALEISERHRHRYEVNTAYKDRLEQHGLRFSGLSPDGVLPEIVEYEDHPWFIGVQYHPELKSRPFEPHPLFASFIQAAVVQSRLV</sequence>
<name>PYRG_NITHX</name>